<evidence type="ECO:0000250" key="1">
    <source>
        <dbReference type="UniProtKB" id="P27635"/>
    </source>
</evidence>
<evidence type="ECO:0000250" key="2">
    <source>
        <dbReference type="UniProtKB" id="Q6ZWV3"/>
    </source>
</evidence>
<evidence type="ECO:0000305" key="3"/>
<comment type="function">
    <text evidence="1">Component of the large ribosomal subunit. Plays a role in the formation of actively translating ribosomes. May play a role in the embryonic brain development.</text>
</comment>
<comment type="subunit">
    <text evidence="1">Component of the large ribosomal subunit. Mature ribosomes consist of a small (40S) and a large (60S) subunit. The 40S subunit contains about 33 different proteins and 1 molecule of RNA (18S). The 60S subunit contains about 49 different proteins and 3 molecules of RNA (28S, 5.8S and 5S).</text>
</comment>
<comment type="subcellular location">
    <subcellularLocation>
        <location evidence="2">Cytoplasm</location>
    </subcellularLocation>
</comment>
<comment type="PTM">
    <text evidence="2">Citrullinated by PADI4.</text>
</comment>
<comment type="PTM">
    <text evidence="2">Ufmylated by UFL1.</text>
</comment>
<comment type="similarity">
    <text evidence="3">Belongs to the universal ribosomal protein uL16 family.</text>
</comment>
<protein>
    <recommendedName>
        <fullName evidence="3">Large ribosomal subunit protein uL16</fullName>
    </recommendedName>
    <alternativeName>
        <fullName evidence="3">60S ribosomal protein L10</fullName>
    </alternativeName>
    <alternativeName>
        <fullName>Protein QM homolog</fullName>
    </alternativeName>
    <alternativeName>
        <fullName evidence="1">Ribosomal protein L10</fullName>
    </alternativeName>
</protein>
<feature type="chain" id="PRO_0000147104" description="Large ribosomal subunit protein uL16">
    <location>
        <begin position="1"/>
        <end position="214"/>
    </location>
</feature>
<feature type="modified residue" description="Citrulline" evidence="2">
    <location>
        <position position="32"/>
    </location>
</feature>
<feature type="cross-link" description="Glycyl lysine isopeptide (Lys-Gly) (interchain with G-Cter in SUMO2)" evidence="1">
    <location>
        <position position="175"/>
    </location>
</feature>
<feature type="cross-link" description="Glycyl lysine isopeptide (Lys-Gly) (interchain with G-Cter in ubiquitin)" evidence="1">
    <location>
        <position position="188"/>
    </location>
</feature>
<feature type="sequence conflict" description="In Ref. 1; AAD33912." evidence="3" ref="1">
    <original>R</original>
    <variation>K</variation>
    <location>
        <position position="128"/>
    </location>
</feature>
<dbReference type="EMBL" id="AF143815">
    <property type="protein sequence ID" value="AAD33912.1"/>
    <property type="molecule type" value="mRNA"/>
</dbReference>
<dbReference type="EMBL" id="BT021081">
    <property type="protein sequence ID" value="AAX09098.1"/>
    <property type="molecule type" value="mRNA"/>
</dbReference>
<dbReference type="EMBL" id="AY911380">
    <property type="protein sequence ID" value="AAW82143.1"/>
    <property type="molecule type" value="mRNA"/>
</dbReference>
<dbReference type="EMBL" id="BC104528">
    <property type="protein sequence ID" value="AAI04529.1"/>
    <property type="molecule type" value="mRNA"/>
</dbReference>
<dbReference type="RefSeq" id="NP_777185.1">
    <property type="nucleotide sequence ID" value="NM_174760.2"/>
</dbReference>
<dbReference type="SMR" id="Q9XSI3"/>
<dbReference type="FunCoup" id="Q9XSI3">
    <property type="interactions" value="1943"/>
</dbReference>
<dbReference type="STRING" id="9913.ENSBTAP00000020266"/>
<dbReference type="PaxDb" id="9913-ENSBTAP00000009803"/>
<dbReference type="GeneID" id="286790"/>
<dbReference type="KEGG" id="bta:286790"/>
<dbReference type="CTD" id="6134"/>
<dbReference type="VEuPathDB" id="HostDB:ENSBTAG00000022275"/>
<dbReference type="eggNOG" id="KOG0857">
    <property type="taxonomic scope" value="Eukaryota"/>
</dbReference>
<dbReference type="HOGENOM" id="CLU_084051_0_0_1"/>
<dbReference type="InParanoid" id="Q9XSI3"/>
<dbReference type="OrthoDB" id="10258869at2759"/>
<dbReference type="TreeFam" id="TF300082"/>
<dbReference type="Reactome" id="R-BTA-156827">
    <property type="pathway name" value="L13a-mediated translational silencing of Ceruloplasmin expression"/>
</dbReference>
<dbReference type="Reactome" id="R-BTA-1799339">
    <property type="pathway name" value="SRP-dependent cotranslational protein targeting to membrane"/>
</dbReference>
<dbReference type="Reactome" id="R-BTA-6791226">
    <property type="pathway name" value="Major pathway of rRNA processing in the nucleolus and cytosol"/>
</dbReference>
<dbReference type="Reactome" id="R-BTA-72689">
    <property type="pathway name" value="Formation of a pool of free 40S subunits"/>
</dbReference>
<dbReference type="Reactome" id="R-BTA-72706">
    <property type="pathway name" value="GTP hydrolysis and joining of the 60S ribosomal subunit"/>
</dbReference>
<dbReference type="Reactome" id="R-BTA-975956">
    <property type="pathway name" value="Nonsense Mediated Decay (NMD) independent of the Exon Junction Complex (EJC)"/>
</dbReference>
<dbReference type="Reactome" id="R-BTA-975957">
    <property type="pathway name" value="Nonsense Mediated Decay (NMD) enhanced by the Exon Junction Complex (EJC)"/>
</dbReference>
<dbReference type="CD-CODE" id="D7FE2080">
    <property type="entry name" value="Nucleolus"/>
</dbReference>
<dbReference type="Proteomes" id="UP000009136">
    <property type="component" value="Chromosome 1"/>
</dbReference>
<dbReference type="Bgee" id="ENSBTAG00000022275">
    <property type="expression patterns" value="Expressed in theca cell and 104 other cell types or tissues"/>
</dbReference>
<dbReference type="GO" id="GO:0022625">
    <property type="term" value="C:cytosolic large ribosomal subunit"/>
    <property type="evidence" value="ECO:0000250"/>
    <property type="project" value="UniProtKB"/>
</dbReference>
<dbReference type="GO" id="GO:0003735">
    <property type="term" value="F:structural constituent of ribosome"/>
    <property type="evidence" value="ECO:0000250"/>
    <property type="project" value="UniProtKB"/>
</dbReference>
<dbReference type="GO" id="GO:0045182">
    <property type="term" value="F:translation regulator activity"/>
    <property type="evidence" value="ECO:0000250"/>
    <property type="project" value="UniProtKB"/>
</dbReference>
<dbReference type="GO" id="GO:1990403">
    <property type="term" value="P:embryonic brain development"/>
    <property type="evidence" value="ECO:0000250"/>
    <property type="project" value="UniProtKB"/>
</dbReference>
<dbReference type="GO" id="GO:0006417">
    <property type="term" value="P:regulation of translation"/>
    <property type="evidence" value="ECO:0000250"/>
    <property type="project" value="UniProtKB"/>
</dbReference>
<dbReference type="GO" id="GO:0006412">
    <property type="term" value="P:translation"/>
    <property type="evidence" value="ECO:0000318"/>
    <property type="project" value="GO_Central"/>
</dbReference>
<dbReference type="CDD" id="cd01433">
    <property type="entry name" value="Ribosomal_L16_L10e"/>
    <property type="match status" value="1"/>
</dbReference>
<dbReference type="FunFam" id="3.30.60.300:FF:000001">
    <property type="entry name" value="60S ribosomal protein L10"/>
    <property type="match status" value="1"/>
</dbReference>
<dbReference type="FunFam" id="3.90.1170.10:FF:000002">
    <property type="entry name" value="60S ribosomal protein L10"/>
    <property type="match status" value="1"/>
</dbReference>
<dbReference type="Gene3D" id="3.30.60.300">
    <property type="match status" value="1"/>
</dbReference>
<dbReference type="Gene3D" id="3.90.1170.10">
    <property type="entry name" value="Ribosomal protein L10e/L16"/>
    <property type="match status" value="1"/>
</dbReference>
<dbReference type="InterPro" id="IPR047873">
    <property type="entry name" value="Ribosomal_uL16"/>
</dbReference>
<dbReference type="InterPro" id="IPR018255">
    <property type="entry name" value="Ribosomal_uL16_CS_euk_arc"/>
</dbReference>
<dbReference type="InterPro" id="IPR016180">
    <property type="entry name" value="Ribosomal_uL16_dom"/>
</dbReference>
<dbReference type="InterPro" id="IPR001197">
    <property type="entry name" value="Ribosomal_uL16_euk_arch"/>
</dbReference>
<dbReference type="InterPro" id="IPR036920">
    <property type="entry name" value="Ribosomal_uL16_sf"/>
</dbReference>
<dbReference type="NCBIfam" id="NF003239">
    <property type="entry name" value="PRK04199.1-4"/>
    <property type="match status" value="1"/>
</dbReference>
<dbReference type="NCBIfam" id="TIGR00279">
    <property type="entry name" value="uL16_euk_arch"/>
    <property type="match status" value="1"/>
</dbReference>
<dbReference type="PANTHER" id="PTHR11726">
    <property type="entry name" value="60S RIBOSOMAL PROTEIN L10"/>
    <property type="match status" value="1"/>
</dbReference>
<dbReference type="Pfam" id="PF00252">
    <property type="entry name" value="Ribosomal_L16"/>
    <property type="match status" value="1"/>
</dbReference>
<dbReference type="PIRSF" id="PIRSF005590">
    <property type="entry name" value="Ribosomal_L10"/>
    <property type="match status" value="1"/>
</dbReference>
<dbReference type="SUPFAM" id="SSF54686">
    <property type="entry name" value="Ribosomal protein L16p/L10e"/>
    <property type="match status" value="1"/>
</dbReference>
<dbReference type="PROSITE" id="PS01257">
    <property type="entry name" value="RIBOSOMAL_L10E"/>
    <property type="match status" value="1"/>
</dbReference>
<name>RL10_BOVIN</name>
<keyword id="KW-0164">Citrullination</keyword>
<keyword id="KW-0963">Cytoplasm</keyword>
<keyword id="KW-0217">Developmental protein</keyword>
<keyword id="KW-1017">Isopeptide bond</keyword>
<keyword id="KW-1185">Reference proteome</keyword>
<keyword id="KW-0687">Ribonucleoprotein</keyword>
<keyword id="KW-0689">Ribosomal protein</keyword>
<keyword id="KW-0832">Ubl conjugation</keyword>
<proteinExistence type="evidence at transcript level"/>
<sequence>MGRRPARCYRYCKNKPYPKSRFCRGVPDAKIRIFDLGRKKAKVDEFPLCGHMVSDEYEQLSSEALEAARICANKYMVKSCGKDGFHIRVRLHPFHVIRINKMLSCAGADRLQTGMRGAFGKPQGTVARVHIGQVIMSIRTKLQNKEHVIEALRRAKFKFPGRQKIHISKKWGFTKFNADEFENMVAEKRLIPDGCGVKYIPNRGPLDKWRALHS</sequence>
<organism>
    <name type="scientific">Bos taurus</name>
    <name type="common">Bovine</name>
    <dbReference type="NCBI Taxonomy" id="9913"/>
    <lineage>
        <taxon>Eukaryota</taxon>
        <taxon>Metazoa</taxon>
        <taxon>Chordata</taxon>
        <taxon>Craniata</taxon>
        <taxon>Vertebrata</taxon>
        <taxon>Euteleostomi</taxon>
        <taxon>Mammalia</taxon>
        <taxon>Eutheria</taxon>
        <taxon>Laurasiatheria</taxon>
        <taxon>Artiodactyla</taxon>
        <taxon>Ruminantia</taxon>
        <taxon>Pecora</taxon>
        <taxon>Bovidae</taxon>
        <taxon>Bovinae</taxon>
        <taxon>Bos</taxon>
    </lineage>
</organism>
<gene>
    <name evidence="1" type="primary">RPL10</name>
    <name type="synonym">QM</name>
</gene>
<accession>Q9XSI3</accession>
<accession>Q3MHY5</accession>
<accession>Q56JV2</accession>
<accession>Q5E939</accession>
<reference key="1">
    <citation type="journal article" date="2000" name="J. Bone Miner. Res.">
        <title>The ribosomal protein QM is expressed differentially during vertebrate endochondral bone development.</title>
        <authorList>
            <person name="Green H."/>
            <person name="Canfield A.E."/>
            <person name="Hillarby M.C."/>
            <person name="Grant M.E."/>
            <person name="Boot-Handford R.P."/>
            <person name="Freemont A.J."/>
            <person name="Wallis G.A."/>
        </authorList>
    </citation>
    <scope>NUCLEOTIDE SEQUENCE [MRNA]</scope>
</reference>
<reference key="2">
    <citation type="journal article" date="2005" name="BMC Genomics">
        <title>Characterization of 954 bovine full-CDS cDNA sequences.</title>
        <authorList>
            <person name="Harhay G.P."/>
            <person name="Sonstegard T.S."/>
            <person name="Keele J.W."/>
            <person name="Heaton M.P."/>
            <person name="Clawson M.L."/>
            <person name="Snelling W.M."/>
            <person name="Wiedmann R.T."/>
            <person name="Van Tassell C.P."/>
            <person name="Smith T.P.L."/>
        </authorList>
    </citation>
    <scope>NUCLEOTIDE SEQUENCE [LARGE SCALE MRNA]</scope>
</reference>
<reference key="3">
    <citation type="submission" date="2005-01" db="EMBL/GenBank/DDBJ databases">
        <title>Analysis of sequences obtained from constructed full-length bovine cDNA libraries.</title>
        <authorList>
            <person name="Yu J."/>
            <person name="Meng Y."/>
            <person name="Wang Z."/>
            <person name="Hansen C."/>
            <person name="Li C."/>
            <person name="Moore S.S."/>
        </authorList>
    </citation>
    <scope>NUCLEOTIDE SEQUENCE [LARGE SCALE MRNA]</scope>
    <source>
        <tissue>Lymphoid epithelium</tissue>
    </source>
</reference>
<reference key="4">
    <citation type="submission" date="2005-09" db="EMBL/GenBank/DDBJ databases">
        <authorList>
            <consortium name="NIH - Mammalian Gene Collection (MGC) project"/>
        </authorList>
    </citation>
    <scope>NUCLEOTIDE SEQUENCE [LARGE SCALE MRNA]</scope>
    <source>
        <strain>Hereford</strain>
        <tissue>Uterus</tissue>
    </source>
</reference>